<proteinExistence type="inferred from homology"/>
<protein>
    <recommendedName>
        <fullName evidence="1">UPF0253 protein YaeP</fullName>
    </recommendedName>
</protein>
<sequence>MEKYCELIRKRYAEIASGDLGYVPDALGCVLKVLNEMAADDALSEAVREKAAYAAANLLVSDYVNE</sequence>
<evidence type="ECO:0000255" key="1">
    <source>
        <dbReference type="HAMAP-Rule" id="MF_01064"/>
    </source>
</evidence>
<feature type="chain" id="PRO_1000084484" description="UPF0253 protein YaeP">
    <location>
        <begin position="1"/>
        <end position="66"/>
    </location>
</feature>
<gene>
    <name evidence="1" type="primary">yaeP</name>
    <name type="ordered locus">EcolC_3470</name>
</gene>
<organism>
    <name type="scientific">Escherichia coli (strain ATCC 8739 / DSM 1576 / NBRC 3972 / NCIMB 8545 / WDCM 00012 / Crooks)</name>
    <dbReference type="NCBI Taxonomy" id="481805"/>
    <lineage>
        <taxon>Bacteria</taxon>
        <taxon>Pseudomonadati</taxon>
        <taxon>Pseudomonadota</taxon>
        <taxon>Gammaproteobacteria</taxon>
        <taxon>Enterobacterales</taxon>
        <taxon>Enterobacteriaceae</taxon>
        <taxon>Escherichia</taxon>
    </lineage>
</organism>
<name>YAEP_ECOLC</name>
<accession>B1IQF1</accession>
<comment type="similarity">
    <text evidence="1">Belongs to the UPF0253 family.</text>
</comment>
<reference key="1">
    <citation type="submission" date="2008-02" db="EMBL/GenBank/DDBJ databases">
        <title>Complete sequence of Escherichia coli C str. ATCC 8739.</title>
        <authorList>
            <person name="Copeland A."/>
            <person name="Lucas S."/>
            <person name="Lapidus A."/>
            <person name="Glavina del Rio T."/>
            <person name="Dalin E."/>
            <person name="Tice H."/>
            <person name="Bruce D."/>
            <person name="Goodwin L."/>
            <person name="Pitluck S."/>
            <person name="Kiss H."/>
            <person name="Brettin T."/>
            <person name="Detter J.C."/>
            <person name="Han C."/>
            <person name="Kuske C.R."/>
            <person name="Schmutz J."/>
            <person name="Larimer F."/>
            <person name="Land M."/>
            <person name="Hauser L."/>
            <person name="Kyrpides N."/>
            <person name="Mikhailova N."/>
            <person name="Ingram L."/>
            <person name="Richardson P."/>
        </authorList>
    </citation>
    <scope>NUCLEOTIDE SEQUENCE [LARGE SCALE GENOMIC DNA]</scope>
    <source>
        <strain>ATCC 8739 / DSM 1576 / NBRC 3972 / NCIMB 8545 / WDCM 00012 / Crooks</strain>
    </source>
</reference>
<dbReference type="EMBL" id="CP000946">
    <property type="protein sequence ID" value="ACA79084.1"/>
    <property type="molecule type" value="Genomic_DNA"/>
</dbReference>
<dbReference type="RefSeq" id="WP_000417058.1">
    <property type="nucleotide sequence ID" value="NZ_MTFT01000035.1"/>
</dbReference>
<dbReference type="SMR" id="B1IQF1"/>
<dbReference type="KEGG" id="ecl:EcolC_3470"/>
<dbReference type="HOGENOM" id="CLU_190008_0_0_6"/>
<dbReference type="HAMAP" id="MF_01064">
    <property type="entry name" value="UPF0253"/>
    <property type="match status" value="1"/>
</dbReference>
<dbReference type="InterPro" id="IPR009624">
    <property type="entry name" value="UPF0253"/>
</dbReference>
<dbReference type="NCBIfam" id="NF003436">
    <property type="entry name" value="PRK04964.1"/>
    <property type="match status" value="1"/>
</dbReference>
<dbReference type="Pfam" id="PF06786">
    <property type="entry name" value="UPF0253"/>
    <property type="match status" value="1"/>
</dbReference>